<organism>
    <name type="scientific">Saccharum hybrid</name>
    <name type="common">Sugarcane</name>
    <dbReference type="NCBI Taxonomy" id="15819"/>
    <lineage>
        <taxon>Eukaryota</taxon>
        <taxon>Viridiplantae</taxon>
        <taxon>Streptophyta</taxon>
        <taxon>Embryophyta</taxon>
        <taxon>Tracheophyta</taxon>
        <taxon>Spermatophyta</taxon>
        <taxon>Magnoliopsida</taxon>
        <taxon>Liliopsida</taxon>
        <taxon>Poales</taxon>
        <taxon>Poaceae</taxon>
        <taxon>PACMAD clade</taxon>
        <taxon>Panicoideae</taxon>
        <taxon>Andropogonodae</taxon>
        <taxon>Andropogoneae</taxon>
        <taxon>Saccharinae</taxon>
        <taxon>Saccharum</taxon>
    </lineage>
</organism>
<keyword id="KW-0150">Chloroplast</keyword>
<keyword id="KW-0472">Membrane</keyword>
<keyword id="KW-0597">Phosphoprotein</keyword>
<keyword id="KW-0602">Photosynthesis</keyword>
<keyword id="KW-0604">Photosystem II</keyword>
<keyword id="KW-0934">Plastid</keyword>
<keyword id="KW-0793">Thylakoid</keyword>
<keyword id="KW-0812">Transmembrane</keyword>
<keyword id="KW-1133">Transmembrane helix</keyword>
<dbReference type="EMBL" id="AE009947">
    <property type="protein sequence ID" value="AAT44720.1"/>
    <property type="molecule type" value="Genomic_DNA"/>
</dbReference>
<dbReference type="SMR" id="Q6L373"/>
<dbReference type="GO" id="GO:0009535">
    <property type="term" value="C:chloroplast thylakoid membrane"/>
    <property type="evidence" value="ECO:0007669"/>
    <property type="project" value="UniProtKB-SubCell"/>
</dbReference>
<dbReference type="GO" id="GO:0009523">
    <property type="term" value="C:photosystem II"/>
    <property type="evidence" value="ECO:0007669"/>
    <property type="project" value="UniProtKB-KW"/>
</dbReference>
<dbReference type="GO" id="GO:0042301">
    <property type="term" value="F:phosphate ion binding"/>
    <property type="evidence" value="ECO:0007669"/>
    <property type="project" value="InterPro"/>
</dbReference>
<dbReference type="GO" id="GO:0015979">
    <property type="term" value="P:photosynthesis"/>
    <property type="evidence" value="ECO:0007669"/>
    <property type="project" value="UniProtKB-UniRule"/>
</dbReference>
<dbReference type="GO" id="GO:0050821">
    <property type="term" value="P:protein stabilization"/>
    <property type="evidence" value="ECO:0007669"/>
    <property type="project" value="InterPro"/>
</dbReference>
<dbReference type="FunFam" id="1.20.5.880:FF:000001">
    <property type="entry name" value="Photosystem II reaction center protein H"/>
    <property type="match status" value="1"/>
</dbReference>
<dbReference type="Gene3D" id="1.20.5.880">
    <property type="entry name" value="Photosystem II reaction center protein H"/>
    <property type="match status" value="1"/>
</dbReference>
<dbReference type="HAMAP" id="MF_00752">
    <property type="entry name" value="PSII_PsbH"/>
    <property type="match status" value="1"/>
</dbReference>
<dbReference type="InterPro" id="IPR001056">
    <property type="entry name" value="PSII_PsbH"/>
</dbReference>
<dbReference type="InterPro" id="IPR036863">
    <property type="entry name" value="PSII_PsbH_sf"/>
</dbReference>
<dbReference type="NCBIfam" id="NF002728">
    <property type="entry name" value="PRK02624.1"/>
    <property type="match status" value="1"/>
</dbReference>
<dbReference type="PANTHER" id="PTHR34469">
    <property type="entry name" value="PHOTOSYSTEM II REACTION CENTER PROTEIN H"/>
    <property type="match status" value="1"/>
</dbReference>
<dbReference type="PANTHER" id="PTHR34469:SF4">
    <property type="entry name" value="PHOTOSYSTEM II REACTION CENTER PROTEIN H"/>
    <property type="match status" value="1"/>
</dbReference>
<dbReference type="Pfam" id="PF00737">
    <property type="entry name" value="PsbH"/>
    <property type="match status" value="1"/>
</dbReference>
<dbReference type="SUPFAM" id="SSF161025">
    <property type="entry name" value="Photosystem II 10 kDa phosphoprotein PsbH"/>
    <property type="match status" value="1"/>
</dbReference>
<sequence>MATQTVEDSSRPKPKRTGAGSLLKPLNSEYGKVAPGWGTTPFMGVAMALFAIFLSIILEIYNSSVLLDGILTN</sequence>
<comment type="function">
    <text evidence="2">One of the components of the core complex of photosystem II (PSII), required for its stability and/or assembly. PSII is a light-driven water:plastoquinone oxidoreductase that uses light energy to abstract electrons from H(2)O, generating O(2) and a proton gradient subsequently used for ATP formation. It consists of a core antenna complex that captures photons, and an electron transfer chain that converts photonic excitation into a charge separation.</text>
</comment>
<comment type="subunit">
    <text evidence="2">PSII is composed of 1 copy each of membrane proteins PsbA, PsbB, PsbC, PsbD, PsbE, PsbF, PsbH, PsbI, PsbJ, PsbK, PsbL, PsbM, PsbT, PsbX, PsbY, PsbZ, Psb30/Ycf12, at least 3 peripheral proteins of the oxygen-evolving complex and a large number of cofactors. It forms dimeric complexes.</text>
</comment>
<comment type="subcellular location">
    <subcellularLocation>
        <location evidence="2">Plastid</location>
        <location evidence="2">Chloroplast thylakoid membrane</location>
        <topology evidence="2">Single-pass membrane protein</topology>
    </subcellularLocation>
</comment>
<comment type="PTM">
    <text evidence="2">Phosphorylation is a light-dependent reaction catalyzed by a membrane-bound kinase; phosphorylation occurs on Thr residue(s) in the N-terminus of the protein.</text>
</comment>
<comment type="similarity">
    <text evidence="2">Belongs to the PsbH family.</text>
</comment>
<feature type="initiator methionine" description="Removed" evidence="1">
    <location>
        <position position="1"/>
    </location>
</feature>
<feature type="chain" id="PRO_0000070534" description="Photosystem II reaction center protein H">
    <location>
        <begin position="2"/>
        <end position="73"/>
    </location>
</feature>
<feature type="transmembrane region" description="Helical" evidence="2">
    <location>
        <begin position="41"/>
        <end position="61"/>
    </location>
</feature>
<feature type="region of interest" description="Disordered" evidence="3">
    <location>
        <begin position="1"/>
        <end position="23"/>
    </location>
</feature>
<feature type="modified residue" description="Phosphothreonine" evidence="2">
    <location>
        <position position="3"/>
    </location>
</feature>
<feature type="modified residue" description="Phosphothreonine" evidence="2">
    <location>
        <position position="5"/>
    </location>
</feature>
<proteinExistence type="inferred from homology"/>
<protein>
    <recommendedName>
        <fullName evidence="2">Photosystem II reaction center protein H</fullName>
        <shortName evidence="2">PSII-H</shortName>
    </recommendedName>
    <alternativeName>
        <fullName evidence="2">Photosystem II 10 kDa phosphoprotein</fullName>
    </alternativeName>
</protein>
<gene>
    <name evidence="2" type="primary">psbH</name>
    <name type="ordered locus">PS154</name>
</gene>
<geneLocation type="chloroplast"/>
<evidence type="ECO:0000250" key="1">
    <source>
        <dbReference type="UniProtKB" id="P56780"/>
    </source>
</evidence>
<evidence type="ECO:0000255" key="2">
    <source>
        <dbReference type="HAMAP-Rule" id="MF_00752"/>
    </source>
</evidence>
<evidence type="ECO:0000256" key="3">
    <source>
        <dbReference type="SAM" id="MobiDB-lite"/>
    </source>
</evidence>
<name>PSBH_SACHY</name>
<accession>Q6L373</accession>
<reference key="1">
    <citation type="journal article" date="2004" name="Curr. Genet.">
        <title>Structural features and transcript-editing analysis of sugarcane (Saccharum officinarum L.) chloroplast genome.</title>
        <authorList>
            <person name="Calsa T. Jr."/>
            <person name="Carraro D.M."/>
            <person name="Benatti M.R."/>
            <person name="Barbosa A.C."/>
            <person name="Kitajima J.P."/>
            <person name="Carrer H."/>
        </authorList>
    </citation>
    <scope>NUCLEOTIDE SEQUENCE [LARGE SCALE GENOMIC DNA]</scope>
    <source>
        <strain>cv. SP-80-3280</strain>
    </source>
</reference>